<keyword id="KW-0002">3D-structure</keyword>
<keyword id="KW-0687">Ribonucleoprotein</keyword>
<keyword id="KW-0689">Ribosomal protein</keyword>
<keyword id="KW-0694">RNA-binding</keyword>
<keyword id="KW-0699">rRNA-binding</keyword>
<accession>Q6A6R0</accession>
<reference key="1">
    <citation type="journal article" date="2004" name="Science">
        <title>The complete genome sequence of Propionibacterium acnes, a commensal of human skin.</title>
        <authorList>
            <person name="Brueggemann H."/>
            <person name="Henne A."/>
            <person name="Hoster F."/>
            <person name="Liesegang H."/>
            <person name="Wiezer A."/>
            <person name="Strittmatter A."/>
            <person name="Hujer S."/>
            <person name="Duerre P."/>
            <person name="Gottschalk G."/>
        </authorList>
    </citation>
    <scope>NUCLEOTIDE SEQUENCE [LARGE SCALE GENOMIC DNA]</scope>
    <source>
        <strain>DSM 16379 / KPA171202</strain>
    </source>
</reference>
<organism>
    <name type="scientific">Cutibacterium acnes (strain DSM 16379 / KPA171202)</name>
    <name type="common">Propionibacterium acnes</name>
    <dbReference type="NCBI Taxonomy" id="267747"/>
    <lineage>
        <taxon>Bacteria</taxon>
        <taxon>Bacillati</taxon>
        <taxon>Actinomycetota</taxon>
        <taxon>Actinomycetes</taxon>
        <taxon>Propionibacteriales</taxon>
        <taxon>Propionibacteriaceae</taxon>
        <taxon>Cutibacterium</taxon>
    </lineage>
</organism>
<proteinExistence type="evidence at protein level"/>
<comment type="function">
    <text evidence="1">One of the primary rRNA binding proteins, it binds directly to 16S rRNA where it nucleates assembly of the body of the 30S subunit.</text>
</comment>
<comment type="function">
    <text evidence="1">With S5 and S12 plays an important role in translational accuracy.</text>
</comment>
<comment type="subunit">
    <text evidence="1">Part of the 30S ribosomal subunit. Contacts protein S5. The interaction surface between S4 and S5 is involved in control of translational fidelity.</text>
</comment>
<comment type="similarity">
    <text evidence="1">Belongs to the universal ribosomal protein uS4 family.</text>
</comment>
<name>RS4_CUTAK</name>
<feature type="chain" id="PRO_0000132434" description="Small ribosomal subunit protein uS4">
    <location>
        <begin position="1"/>
        <end position="201"/>
    </location>
</feature>
<feature type="domain" description="S4 RNA-binding" evidence="1">
    <location>
        <begin position="91"/>
        <end position="157"/>
    </location>
</feature>
<feature type="region of interest" description="Disordered" evidence="2">
    <location>
        <begin position="1"/>
        <end position="45"/>
    </location>
</feature>
<feature type="helix" evidence="4">
    <location>
        <begin position="8"/>
        <end position="15"/>
    </location>
</feature>
<feature type="strand" evidence="4">
    <location>
        <begin position="22"/>
        <end position="24"/>
    </location>
</feature>
<feature type="helix" evidence="4">
    <location>
        <begin position="25"/>
        <end position="28"/>
    </location>
</feature>
<feature type="strand" evidence="4">
    <location>
        <begin position="33"/>
        <end position="36"/>
    </location>
</feature>
<feature type="helix" evidence="4">
    <location>
        <begin position="45"/>
        <end position="60"/>
    </location>
</feature>
<feature type="helix" evidence="4">
    <location>
        <begin position="64"/>
        <end position="76"/>
    </location>
</feature>
<feature type="strand" evidence="4">
    <location>
        <begin position="77"/>
        <end position="79"/>
    </location>
</feature>
<feature type="helix" evidence="4">
    <location>
        <begin position="81"/>
        <end position="91"/>
    </location>
</feature>
<feature type="helix" evidence="4">
    <location>
        <begin position="93"/>
        <end position="100"/>
    </location>
</feature>
<feature type="strand" evidence="4">
    <location>
        <begin position="102"/>
        <end position="105"/>
    </location>
</feature>
<feature type="helix" evidence="4">
    <location>
        <begin position="106"/>
        <end position="115"/>
    </location>
</feature>
<feature type="strand" evidence="4">
    <location>
        <begin position="118"/>
        <end position="120"/>
    </location>
</feature>
<feature type="strand" evidence="4">
    <location>
        <begin position="137"/>
        <end position="140"/>
    </location>
</feature>
<feature type="turn" evidence="4">
    <location>
        <begin position="143"/>
        <end position="146"/>
    </location>
</feature>
<feature type="helix" evidence="4">
    <location>
        <begin position="148"/>
        <end position="156"/>
    </location>
</feature>
<feature type="turn" evidence="4">
    <location>
        <begin position="157"/>
        <end position="159"/>
    </location>
</feature>
<feature type="strand" evidence="4">
    <location>
        <begin position="166"/>
        <end position="168"/>
    </location>
</feature>
<feature type="helix" evidence="4">
    <location>
        <begin position="170"/>
        <end position="172"/>
    </location>
</feature>
<feature type="strand" evidence="4">
    <location>
        <begin position="174"/>
        <end position="177"/>
    </location>
</feature>
<feature type="turn" evidence="4">
    <location>
        <begin position="183"/>
        <end position="185"/>
    </location>
</feature>
<feature type="helix" evidence="4">
    <location>
        <begin position="192"/>
        <end position="198"/>
    </location>
</feature>
<gene>
    <name evidence="1" type="primary">rpsD</name>
    <name type="ordered locus">PPA1827</name>
</gene>
<dbReference type="EMBL" id="AE017283">
    <property type="protein sequence ID" value="AAT83553.1"/>
    <property type="molecule type" value="Genomic_DNA"/>
</dbReference>
<dbReference type="RefSeq" id="WP_002514832.1">
    <property type="nucleotide sequence ID" value="NZ_CP025935.1"/>
</dbReference>
<dbReference type="PDB" id="8CRX">
    <property type="method" value="EM"/>
    <property type="resolution" value="2.78 A"/>
    <property type="chains" value="D=1-201"/>
</dbReference>
<dbReference type="PDB" id="8CWO">
    <property type="method" value="EM"/>
    <property type="resolution" value="2.84 A"/>
    <property type="chains" value="D=1-201"/>
</dbReference>
<dbReference type="PDBsum" id="8CRX"/>
<dbReference type="PDBsum" id="8CWO"/>
<dbReference type="SMR" id="Q6A6R0"/>
<dbReference type="EnsemblBacteria" id="AAT83553">
    <property type="protein sequence ID" value="AAT83553"/>
    <property type="gene ID" value="PPA1827"/>
</dbReference>
<dbReference type="GeneID" id="92857778"/>
<dbReference type="KEGG" id="pac:PPA1827"/>
<dbReference type="eggNOG" id="COG0522">
    <property type="taxonomic scope" value="Bacteria"/>
</dbReference>
<dbReference type="HOGENOM" id="CLU_092403_0_2_11"/>
<dbReference type="Proteomes" id="UP000000603">
    <property type="component" value="Chromosome"/>
</dbReference>
<dbReference type="GO" id="GO:0015935">
    <property type="term" value="C:small ribosomal subunit"/>
    <property type="evidence" value="ECO:0007669"/>
    <property type="project" value="InterPro"/>
</dbReference>
<dbReference type="GO" id="GO:0019843">
    <property type="term" value="F:rRNA binding"/>
    <property type="evidence" value="ECO:0007669"/>
    <property type="project" value="UniProtKB-UniRule"/>
</dbReference>
<dbReference type="GO" id="GO:0003735">
    <property type="term" value="F:structural constituent of ribosome"/>
    <property type="evidence" value="ECO:0007669"/>
    <property type="project" value="InterPro"/>
</dbReference>
<dbReference type="GO" id="GO:0042274">
    <property type="term" value="P:ribosomal small subunit biogenesis"/>
    <property type="evidence" value="ECO:0007669"/>
    <property type="project" value="TreeGrafter"/>
</dbReference>
<dbReference type="GO" id="GO:0006412">
    <property type="term" value="P:translation"/>
    <property type="evidence" value="ECO:0007669"/>
    <property type="project" value="UniProtKB-UniRule"/>
</dbReference>
<dbReference type="CDD" id="cd00165">
    <property type="entry name" value="S4"/>
    <property type="match status" value="1"/>
</dbReference>
<dbReference type="FunFam" id="1.10.1050.10:FF:000001">
    <property type="entry name" value="30S ribosomal protein S4"/>
    <property type="match status" value="1"/>
</dbReference>
<dbReference type="FunFam" id="3.10.290.10:FF:000001">
    <property type="entry name" value="30S ribosomal protein S4"/>
    <property type="match status" value="1"/>
</dbReference>
<dbReference type="Gene3D" id="1.10.1050.10">
    <property type="entry name" value="Ribosomal Protein S4 Delta 41, Chain A, domain 1"/>
    <property type="match status" value="1"/>
</dbReference>
<dbReference type="Gene3D" id="3.10.290.10">
    <property type="entry name" value="RNA-binding S4 domain"/>
    <property type="match status" value="1"/>
</dbReference>
<dbReference type="HAMAP" id="MF_01306_B">
    <property type="entry name" value="Ribosomal_uS4_B"/>
    <property type="match status" value="1"/>
</dbReference>
<dbReference type="InterPro" id="IPR022801">
    <property type="entry name" value="Ribosomal_uS4"/>
</dbReference>
<dbReference type="InterPro" id="IPR005709">
    <property type="entry name" value="Ribosomal_uS4_bac-type"/>
</dbReference>
<dbReference type="InterPro" id="IPR018079">
    <property type="entry name" value="Ribosomal_uS4_CS"/>
</dbReference>
<dbReference type="InterPro" id="IPR001912">
    <property type="entry name" value="Ribosomal_uS4_N"/>
</dbReference>
<dbReference type="InterPro" id="IPR002942">
    <property type="entry name" value="S4_RNA-bd"/>
</dbReference>
<dbReference type="InterPro" id="IPR036986">
    <property type="entry name" value="S4_RNA-bd_sf"/>
</dbReference>
<dbReference type="NCBIfam" id="NF003717">
    <property type="entry name" value="PRK05327.1"/>
    <property type="match status" value="1"/>
</dbReference>
<dbReference type="NCBIfam" id="TIGR01017">
    <property type="entry name" value="rpsD_bact"/>
    <property type="match status" value="1"/>
</dbReference>
<dbReference type="PANTHER" id="PTHR11831">
    <property type="entry name" value="30S 40S RIBOSOMAL PROTEIN"/>
    <property type="match status" value="1"/>
</dbReference>
<dbReference type="PANTHER" id="PTHR11831:SF4">
    <property type="entry name" value="SMALL RIBOSOMAL SUBUNIT PROTEIN US4M"/>
    <property type="match status" value="1"/>
</dbReference>
<dbReference type="Pfam" id="PF00163">
    <property type="entry name" value="Ribosomal_S4"/>
    <property type="match status" value="1"/>
</dbReference>
<dbReference type="Pfam" id="PF01479">
    <property type="entry name" value="S4"/>
    <property type="match status" value="1"/>
</dbReference>
<dbReference type="SMART" id="SM01390">
    <property type="entry name" value="Ribosomal_S4"/>
    <property type="match status" value="1"/>
</dbReference>
<dbReference type="SMART" id="SM00363">
    <property type="entry name" value="S4"/>
    <property type="match status" value="1"/>
</dbReference>
<dbReference type="SUPFAM" id="SSF55174">
    <property type="entry name" value="Alpha-L RNA-binding motif"/>
    <property type="match status" value="1"/>
</dbReference>
<dbReference type="PROSITE" id="PS00632">
    <property type="entry name" value="RIBOSOMAL_S4"/>
    <property type="match status" value="1"/>
</dbReference>
<dbReference type="PROSITE" id="PS50889">
    <property type="entry name" value="S4"/>
    <property type="match status" value="1"/>
</dbReference>
<evidence type="ECO:0000255" key="1">
    <source>
        <dbReference type="HAMAP-Rule" id="MF_01306"/>
    </source>
</evidence>
<evidence type="ECO:0000256" key="2">
    <source>
        <dbReference type="SAM" id="MobiDB-lite"/>
    </source>
</evidence>
<evidence type="ECO:0000305" key="3"/>
<evidence type="ECO:0007829" key="4">
    <source>
        <dbReference type="PDB" id="8CWO"/>
    </source>
</evidence>
<protein>
    <recommendedName>
        <fullName evidence="1">Small ribosomal subunit protein uS4</fullName>
    </recommendedName>
    <alternativeName>
        <fullName evidence="3">30S ribosomal protein S4</fullName>
    </alternativeName>
</protein>
<sequence length="201" mass="23229">MARYTGPLTKKSRRLGTDLVGNDKSFERRPYPPGVHGRGRTKDSEYSLQLREKQKARYAYGVLEKQFRRYYEEADRAQGKTGDVLLQILESRLDNVVYRAGLAATRRQARQMVSHGHFLVNGKKVNIPSYRVSTHDIIDVREKSKDLPPIVIARETFETRDVPAWLEVRPNKGRILVHQLPTRDQIVIDVNEQAIVELYSK</sequence>